<protein>
    <recommendedName>
        <fullName>Uncharacterized protein MJECS01</fullName>
    </recommendedName>
</protein>
<reference key="1">
    <citation type="journal article" date="1996" name="Science">
        <title>Complete genome sequence of the methanogenic archaeon, Methanococcus jannaschii.</title>
        <authorList>
            <person name="Bult C.J."/>
            <person name="White O."/>
            <person name="Olsen G.J."/>
            <person name="Zhou L."/>
            <person name="Fleischmann R.D."/>
            <person name="Sutton G.G."/>
            <person name="Blake J.A."/>
            <person name="FitzGerald L.M."/>
            <person name="Clayton R.A."/>
            <person name="Gocayne J.D."/>
            <person name="Kerlavage A.R."/>
            <person name="Dougherty B.A."/>
            <person name="Tomb J.-F."/>
            <person name="Adams M.D."/>
            <person name="Reich C.I."/>
            <person name="Overbeek R."/>
            <person name="Kirkness E.F."/>
            <person name="Weinstock K.G."/>
            <person name="Merrick J.M."/>
            <person name="Glodek A."/>
            <person name="Scott J.L."/>
            <person name="Geoghagen N.S.M."/>
            <person name="Weidman J.F."/>
            <person name="Fuhrmann J.L."/>
            <person name="Nguyen D."/>
            <person name="Utterback T.R."/>
            <person name="Kelley J.M."/>
            <person name="Peterson J.D."/>
            <person name="Sadow P.W."/>
            <person name="Hanna M.C."/>
            <person name="Cotton M.D."/>
            <person name="Roberts K.M."/>
            <person name="Hurst M.A."/>
            <person name="Kaine B.P."/>
            <person name="Borodovsky M."/>
            <person name="Klenk H.-P."/>
            <person name="Fraser C.M."/>
            <person name="Smith H.O."/>
            <person name="Woese C.R."/>
            <person name="Venter J.C."/>
        </authorList>
    </citation>
    <scope>NUCLEOTIDE SEQUENCE [LARGE SCALE GENOMIC DNA]</scope>
    <source>
        <strain>ATCC 43067 / DSM 2661 / JAL-1 / JCM 10045 / NBRC 100440</strain>
    </source>
</reference>
<geneLocation type="plasmid">
    <name>small ECE</name>
</geneLocation>
<gene>
    <name type="ordered locus">MJECS01</name>
</gene>
<accession>Q60300</accession>
<name>Y3401_METJA</name>
<organism>
    <name type="scientific">Methanocaldococcus jannaschii (strain ATCC 43067 / DSM 2661 / JAL-1 / JCM 10045 / NBRC 100440)</name>
    <name type="common">Methanococcus jannaschii</name>
    <dbReference type="NCBI Taxonomy" id="243232"/>
    <lineage>
        <taxon>Archaea</taxon>
        <taxon>Methanobacteriati</taxon>
        <taxon>Methanobacteriota</taxon>
        <taxon>Methanomada group</taxon>
        <taxon>Methanococci</taxon>
        <taxon>Methanococcales</taxon>
        <taxon>Methanocaldococcaceae</taxon>
        <taxon>Methanocaldococcus</taxon>
    </lineage>
</organism>
<dbReference type="EMBL" id="L77119">
    <property type="protein sequence ID" value="AAC37059.1"/>
    <property type="molecule type" value="Genomic_DNA"/>
</dbReference>
<dbReference type="PIR" id="A64516">
    <property type="entry name" value="A64516"/>
</dbReference>
<dbReference type="RefSeq" id="WP_010890094.1">
    <property type="nucleotide sequence ID" value="NC_001733.1"/>
</dbReference>
<dbReference type="PaxDb" id="243232-MJ_ECS01"/>
<dbReference type="EnsemblBacteria" id="AAC37059">
    <property type="protein sequence ID" value="AAC37059"/>
    <property type="gene ID" value="MJ_ECS01"/>
</dbReference>
<dbReference type="GeneID" id="1450828"/>
<dbReference type="KEGG" id="mja:MJ_ECS01"/>
<dbReference type="eggNOG" id="arCOG11560">
    <property type="taxonomic scope" value="Archaea"/>
</dbReference>
<dbReference type="HOGENOM" id="CLU_1088283_0_0_2"/>
<dbReference type="InParanoid" id="Q60300"/>
<dbReference type="OrthoDB" id="385803at2157"/>
<dbReference type="Proteomes" id="UP000000805">
    <property type="component" value="Plasmid pDSM2661_2"/>
</dbReference>
<proteinExistence type="predicted"/>
<feature type="chain" id="PRO_0000107483" description="Uncharacterized protein MJECS01">
    <location>
        <begin position="1"/>
        <end position="276"/>
    </location>
</feature>
<keyword id="KW-0614">Plasmid</keyword>
<keyword id="KW-1185">Reference proteome</keyword>
<sequence length="276" mass="32558">MKFIFEKYYRHPINKYNGSKITPISQKNIFVVIKVELDDNELNNIHDEAKKLAEDVCEKNPSGDIRTEERKLLSSFCGLIAEKVVKQLITEKLMLIKDYIEIKGANVSNENFNYESHNDIEIHLSNDEIITIEIRSSIATKYDLNDILNKDFDILGSYTTSYKSKEHNKDYYFRIIFHNPGDYGYNPHLKKWEYNKRLENAFKQEKNKALDYFKNNVKVYFVGGCTFDDLENYGEHDDLKQKNAEYWIIRPITKGRDVLEILEILEKDILNKLGFL</sequence>